<name>TRUA_BRUAB</name>
<comment type="function">
    <text evidence="1">Formation of pseudouridine at positions 38, 39 and 40 in the anticodon stem and loop of transfer RNAs.</text>
</comment>
<comment type="catalytic activity">
    <reaction evidence="1">
        <text>uridine(38/39/40) in tRNA = pseudouridine(38/39/40) in tRNA</text>
        <dbReference type="Rhea" id="RHEA:22376"/>
        <dbReference type="Rhea" id="RHEA-COMP:10085"/>
        <dbReference type="Rhea" id="RHEA-COMP:10087"/>
        <dbReference type="ChEBI" id="CHEBI:65314"/>
        <dbReference type="ChEBI" id="CHEBI:65315"/>
        <dbReference type="EC" id="5.4.99.12"/>
    </reaction>
</comment>
<comment type="subunit">
    <text evidence="1">Homodimer.</text>
</comment>
<comment type="similarity">
    <text evidence="1">Belongs to the tRNA pseudouridine synthase TruA family.</text>
</comment>
<dbReference type="EC" id="5.4.99.12" evidence="1"/>
<dbReference type="EMBL" id="AE017224">
    <property type="protein sequence ID" value="AAX76353.1"/>
    <property type="molecule type" value="Genomic_DNA"/>
</dbReference>
<dbReference type="RefSeq" id="WP_002965618.1">
    <property type="nucleotide sequence ID" value="NC_006933.1"/>
</dbReference>
<dbReference type="SMR" id="Q576T1"/>
<dbReference type="EnsemblBacteria" id="AAX76353">
    <property type="protein sequence ID" value="AAX76353"/>
    <property type="gene ID" value="BruAb2_0973"/>
</dbReference>
<dbReference type="GeneID" id="97534918"/>
<dbReference type="KEGG" id="bmb:BruAb2_0973"/>
<dbReference type="HOGENOM" id="CLU_014673_0_2_5"/>
<dbReference type="Proteomes" id="UP000000540">
    <property type="component" value="Chromosome II"/>
</dbReference>
<dbReference type="GO" id="GO:0003723">
    <property type="term" value="F:RNA binding"/>
    <property type="evidence" value="ECO:0007669"/>
    <property type="project" value="InterPro"/>
</dbReference>
<dbReference type="GO" id="GO:0160147">
    <property type="term" value="F:tRNA pseudouridine(38-40) synthase activity"/>
    <property type="evidence" value="ECO:0007669"/>
    <property type="project" value="UniProtKB-EC"/>
</dbReference>
<dbReference type="GO" id="GO:0031119">
    <property type="term" value="P:tRNA pseudouridine synthesis"/>
    <property type="evidence" value="ECO:0007669"/>
    <property type="project" value="UniProtKB-UniRule"/>
</dbReference>
<dbReference type="CDD" id="cd02570">
    <property type="entry name" value="PseudoU_synth_EcTruA"/>
    <property type="match status" value="1"/>
</dbReference>
<dbReference type="FunFam" id="3.30.70.580:FF:000001">
    <property type="entry name" value="tRNA pseudouridine synthase A"/>
    <property type="match status" value="1"/>
</dbReference>
<dbReference type="Gene3D" id="3.30.70.660">
    <property type="entry name" value="Pseudouridine synthase I, catalytic domain, C-terminal subdomain"/>
    <property type="match status" value="1"/>
</dbReference>
<dbReference type="Gene3D" id="3.30.70.580">
    <property type="entry name" value="Pseudouridine synthase I, catalytic domain, N-terminal subdomain"/>
    <property type="match status" value="1"/>
</dbReference>
<dbReference type="HAMAP" id="MF_00171">
    <property type="entry name" value="TruA"/>
    <property type="match status" value="1"/>
</dbReference>
<dbReference type="InterPro" id="IPR020103">
    <property type="entry name" value="PsdUridine_synth_cat_dom_sf"/>
</dbReference>
<dbReference type="InterPro" id="IPR001406">
    <property type="entry name" value="PsdUridine_synth_TruA"/>
</dbReference>
<dbReference type="InterPro" id="IPR020097">
    <property type="entry name" value="PsdUridine_synth_TruA_a/b_dom"/>
</dbReference>
<dbReference type="InterPro" id="IPR020095">
    <property type="entry name" value="PsdUridine_synth_TruA_C"/>
</dbReference>
<dbReference type="InterPro" id="IPR020094">
    <property type="entry name" value="TruA/RsuA/RluB/E/F_N"/>
</dbReference>
<dbReference type="NCBIfam" id="TIGR00071">
    <property type="entry name" value="hisT_truA"/>
    <property type="match status" value="1"/>
</dbReference>
<dbReference type="PANTHER" id="PTHR11142">
    <property type="entry name" value="PSEUDOURIDYLATE SYNTHASE"/>
    <property type="match status" value="1"/>
</dbReference>
<dbReference type="PANTHER" id="PTHR11142:SF0">
    <property type="entry name" value="TRNA PSEUDOURIDINE SYNTHASE-LIKE 1"/>
    <property type="match status" value="1"/>
</dbReference>
<dbReference type="Pfam" id="PF01416">
    <property type="entry name" value="PseudoU_synth_1"/>
    <property type="match status" value="2"/>
</dbReference>
<dbReference type="PIRSF" id="PIRSF001430">
    <property type="entry name" value="tRNA_psdUrid_synth"/>
    <property type="match status" value="1"/>
</dbReference>
<dbReference type="SUPFAM" id="SSF55120">
    <property type="entry name" value="Pseudouridine synthase"/>
    <property type="match status" value="1"/>
</dbReference>
<keyword id="KW-0413">Isomerase</keyword>
<keyword id="KW-0819">tRNA processing</keyword>
<organism>
    <name type="scientific">Brucella abortus biovar 1 (strain 9-941)</name>
    <dbReference type="NCBI Taxonomy" id="262698"/>
    <lineage>
        <taxon>Bacteria</taxon>
        <taxon>Pseudomonadati</taxon>
        <taxon>Pseudomonadota</taxon>
        <taxon>Alphaproteobacteria</taxon>
        <taxon>Hyphomicrobiales</taxon>
        <taxon>Brucellaceae</taxon>
        <taxon>Brucella/Ochrobactrum group</taxon>
        <taxon>Brucella</taxon>
    </lineage>
</organism>
<evidence type="ECO:0000255" key="1">
    <source>
        <dbReference type="HAMAP-Rule" id="MF_00171"/>
    </source>
</evidence>
<reference key="1">
    <citation type="journal article" date="2005" name="J. Bacteriol.">
        <title>Completion of the genome sequence of Brucella abortus and comparison to the highly similar genomes of Brucella melitensis and Brucella suis.</title>
        <authorList>
            <person name="Halling S.M."/>
            <person name="Peterson-Burch B.D."/>
            <person name="Bricker B.J."/>
            <person name="Zuerner R.L."/>
            <person name="Qing Z."/>
            <person name="Li L.-L."/>
            <person name="Kapur V."/>
            <person name="Alt D.P."/>
            <person name="Olsen S.C."/>
        </authorList>
    </citation>
    <scope>NUCLEOTIDE SEQUENCE [LARGE SCALE GENOMIC DNA]</scope>
    <source>
        <strain>9-941</strain>
    </source>
</reference>
<accession>Q576T1</accession>
<proteinExistence type="inferred from homology"/>
<gene>
    <name evidence="1" type="primary">truA</name>
    <name type="ordered locus">BruAb2_0973</name>
</gene>
<feature type="chain" id="PRO_1000017048" description="tRNA pseudouridine synthase A">
    <location>
        <begin position="1"/>
        <end position="251"/>
    </location>
</feature>
<feature type="active site" description="Nucleophile" evidence="1">
    <location>
        <position position="52"/>
    </location>
</feature>
<feature type="binding site" evidence="1">
    <location>
        <position position="113"/>
    </location>
    <ligand>
        <name>substrate</name>
    </ligand>
</feature>
<sequence length="251" mass="28172">MPRYKLTVEYDGTPYVGWQRQENGHAVQGAIEQAFKKFCGEDLTLSAAGRTDAGVHATAQVAHVDLAKDWGAGKVRDAVNAHLVMADERISILNVEKTTDTFDARFSARARHYLYRIHNRRAPLAVDYQRAWWVQKQLDADAMHEAAQRLLGEHDFTTFRATQCQAKSPVKTLDRLDVTRNGDMVEMRVSARSFLHNQVRSFAGSLMEVGVGRWTADDLQAALEARDRKACGQVAPPYGLYLVGVDYAFPF</sequence>
<protein>
    <recommendedName>
        <fullName evidence="1">tRNA pseudouridine synthase A</fullName>
        <ecNumber evidence="1">5.4.99.12</ecNumber>
    </recommendedName>
    <alternativeName>
        <fullName evidence="1">tRNA pseudouridine(38-40) synthase</fullName>
    </alternativeName>
    <alternativeName>
        <fullName evidence="1">tRNA pseudouridylate synthase I</fullName>
    </alternativeName>
    <alternativeName>
        <fullName evidence="1">tRNA-uridine isomerase I</fullName>
    </alternativeName>
</protein>